<proteinExistence type="inferred from homology"/>
<dbReference type="EMBL" id="AY741371">
    <property type="protein sequence ID" value="AAX13829.1"/>
    <property type="molecule type" value="Genomic_DNA"/>
</dbReference>
<dbReference type="RefSeq" id="YP_277330.1">
    <property type="nucleotide sequence ID" value="NC_007288.1"/>
</dbReference>
<dbReference type="SMR" id="Q4G3D7"/>
<dbReference type="STRING" id="2903.Q4G3D7"/>
<dbReference type="GeneID" id="3562560"/>
<dbReference type="GO" id="GO:0009535">
    <property type="term" value="C:chloroplast thylakoid membrane"/>
    <property type="evidence" value="ECO:0007669"/>
    <property type="project" value="UniProtKB-SubCell"/>
</dbReference>
<dbReference type="GO" id="GO:0009055">
    <property type="term" value="F:electron transfer activity"/>
    <property type="evidence" value="ECO:0007669"/>
    <property type="project" value="UniProtKB-UniRule"/>
</dbReference>
<dbReference type="GO" id="GO:0020037">
    <property type="term" value="F:heme binding"/>
    <property type="evidence" value="ECO:0007669"/>
    <property type="project" value="InterPro"/>
</dbReference>
<dbReference type="GO" id="GO:0005506">
    <property type="term" value="F:iron ion binding"/>
    <property type="evidence" value="ECO:0007669"/>
    <property type="project" value="InterPro"/>
</dbReference>
<dbReference type="GO" id="GO:0015979">
    <property type="term" value="P:photosynthesis"/>
    <property type="evidence" value="ECO:0007669"/>
    <property type="project" value="UniProtKB-UniRule"/>
</dbReference>
<dbReference type="FunFam" id="1.20.5.700:FF:000001">
    <property type="entry name" value="Cytochrome f"/>
    <property type="match status" value="1"/>
</dbReference>
<dbReference type="FunFam" id="2.60.40.830:FF:000001">
    <property type="entry name" value="Cytochrome f"/>
    <property type="match status" value="1"/>
</dbReference>
<dbReference type="Gene3D" id="2.40.50.100">
    <property type="match status" value="1"/>
</dbReference>
<dbReference type="Gene3D" id="2.60.40.830">
    <property type="entry name" value="Cytochrome f large domain"/>
    <property type="match status" value="1"/>
</dbReference>
<dbReference type="Gene3D" id="1.20.5.700">
    <property type="entry name" value="Single helix bin"/>
    <property type="match status" value="1"/>
</dbReference>
<dbReference type="HAMAP" id="MF_00610">
    <property type="entry name" value="Cytb6_f_cytF"/>
    <property type="match status" value="1"/>
</dbReference>
<dbReference type="InterPro" id="IPR024058">
    <property type="entry name" value="Cyt-f_TM"/>
</dbReference>
<dbReference type="InterPro" id="IPR002325">
    <property type="entry name" value="Cyt_f"/>
</dbReference>
<dbReference type="InterPro" id="IPR024094">
    <property type="entry name" value="Cyt_f_lg_dom"/>
</dbReference>
<dbReference type="InterPro" id="IPR036826">
    <property type="entry name" value="Cyt_f_lg_dom_sf"/>
</dbReference>
<dbReference type="InterPro" id="IPR011054">
    <property type="entry name" value="Rudment_hybrid_motif"/>
</dbReference>
<dbReference type="PANTHER" id="PTHR33288">
    <property type="match status" value="1"/>
</dbReference>
<dbReference type="PANTHER" id="PTHR33288:SF10">
    <property type="entry name" value="CYTOCHROME F"/>
    <property type="match status" value="1"/>
</dbReference>
<dbReference type="Pfam" id="PF01333">
    <property type="entry name" value="Apocytochr_F_C"/>
    <property type="match status" value="1"/>
</dbReference>
<dbReference type="Pfam" id="PF16639">
    <property type="entry name" value="Apocytochr_F_N"/>
    <property type="match status" value="1"/>
</dbReference>
<dbReference type="PRINTS" id="PR00610">
    <property type="entry name" value="CYTOCHROMEF"/>
</dbReference>
<dbReference type="SUPFAM" id="SSF103431">
    <property type="entry name" value="Cytochrome f subunit of the cytochrome b6f complex, transmembrane anchor"/>
    <property type="match status" value="1"/>
</dbReference>
<dbReference type="SUPFAM" id="SSF49441">
    <property type="entry name" value="Cytochrome f, large domain"/>
    <property type="match status" value="1"/>
</dbReference>
<dbReference type="SUPFAM" id="SSF51246">
    <property type="entry name" value="Rudiment single hybrid motif"/>
    <property type="match status" value="1"/>
</dbReference>
<dbReference type="PROSITE" id="PS51010">
    <property type="entry name" value="CYTF"/>
    <property type="match status" value="1"/>
</dbReference>
<keyword id="KW-0150">Chloroplast</keyword>
<keyword id="KW-0249">Electron transport</keyword>
<keyword id="KW-0349">Heme</keyword>
<keyword id="KW-0408">Iron</keyword>
<keyword id="KW-0472">Membrane</keyword>
<keyword id="KW-0479">Metal-binding</keyword>
<keyword id="KW-0602">Photosynthesis</keyword>
<keyword id="KW-0934">Plastid</keyword>
<keyword id="KW-0732">Signal</keyword>
<keyword id="KW-0793">Thylakoid</keyword>
<keyword id="KW-0812">Transmembrane</keyword>
<keyword id="KW-1133">Transmembrane helix</keyword>
<keyword id="KW-0813">Transport</keyword>
<name>CYF_EMIHU</name>
<sequence length="312" mass="33641">MQISKFFKFVFISVSLCGSLLFPQMANAYPVFAQQAYDNPREATGRIVCANCHLAQKPTEVEVPQAVLPDTVFEAVVNIPYDTKVQQVTASGTPGPLNVGAVVILPEGFKLAPKGRMSDELKAKTKGVFVQPYSKTRPNILVVGPILGEKNREVTFPILAPDPAQDKSVHYLNYPIYVGANRGRGQVYPSGEKSNNNTFTSTAAGKVTAIEAGDKGTTRVTIQTAAGEAKEQTVPAGLKVSVKTGDVIQADQALSYNPNVGGFGQAETEVILQSPNRVKGMIAFFFTVTVAQILLVLKKKQFEKVQAAEMNF</sequence>
<geneLocation type="chloroplast"/>
<feature type="signal peptide" evidence="2">
    <location>
        <begin position="1"/>
        <end position="28"/>
    </location>
</feature>
<feature type="chain" id="PRO_0000275465" description="Cytochrome f">
    <location>
        <begin position="29"/>
        <end position="312"/>
    </location>
</feature>
<feature type="transmembrane region" description="Helical" evidence="2">
    <location>
        <begin position="278"/>
        <end position="298"/>
    </location>
</feature>
<feature type="binding site" description="axial binding residue" evidence="2">
    <location>
        <position position="29"/>
    </location>
    <ligand>
        <name>heme</name>
        <dbReference type="ChEBI" id="CHEBI:30413"/>
    </ligand>
    <ligandPart>
        <name>Fe</name>
        <dbReference type="ChEBI" id="CHEBI:18248"/>
    </ligandPart>
</feature>
<feature type="binding site" description="covalent" evidence="2">
    <location>
        <position position="49"/>
    </location>
    <ligand>
        <name>heme</name>
        <dbReference type="ChEBI" id="CHEBI:30413"/>
    </ligand>
</feature>
<feature type="binding site" description="covalent" evidence="2">
    <location>
        <position position="52"/>
    </location>
    <ligand>
        <name>heme</name>
        <dbReference type="ChEBI" id="CHEBI:30413"/>
    </ligand>
</feature>
<feature type="binding site" description="axial binding residue" evidence="2">
    <location>
        <position position="53"/>
    </location>
    <ligand>
        <name>heme</name>
        <dbReference type="ChEBI" id="CHEBI:30413"/>
    </ligand>
    <ligandPart>
        <name>Fe</name>
        <dbReference type="ChEBI" id="CHEBI:18248"/>
    </ligandPart>
</feature>
<comment type="function">
    <text evidence="2">Component of the cytochrome b6-f complex, which mediates electron transfer between photosystem II (PSII) and photosystem I (PSI), cyclic electron flow around PSI, and state transitions.</text>
</comment>
<comment type="cofactor">
    <cofactor evidence="2">
        <name>heme</name>
        <dbReference type="ChEBI" id="CHEBI:30413"/>
    </cofactor>
    <text evidence="2">Binds 1 heme group covalently.</text>
</comment>
<comment type="subunit">
    <text evidence="1">The 4 large subunits of the cytochrome b6-f complex are cytochrome b6, subunit IV (17 kDa polypeptide, petD), cytochrome f and the Rieske protein, while the 4 small subunits are PetG, PetL, PetM and PetN. The complex functions as a dimer (By similarity).</text>
</comment>
<comment type="subcellular location">
    <subcellularLocation>
        <location evidence="2">Plastid</location>
        <location evidence="2">Chloroplast thylakoid membrane</location>
        <topology evidence="2">Single-pass membrane protein</topology>
    </subcellularLocation>
</comment>
<comment type="similarity">
    <text evidence="2">Belongs to the cytochrome f family.</text>
</comment>
<reference key="1">
    <citation type="journal article" date="2005" name="DNA Res.">
        <title>The complete plastid genome sequence of the haptophyte Emiliania huxleyi: a comparison to other plastid genomes.</title>
        <authorList>
            <person name="Sanchez-Puerta M.V."/>
            <person name="Bachvaroff T.R."/>
            <person name="Delwiche C.F."/>
        </authorList>
    </citation>
    <scope>NUCLEOTIDE SEQUENCE [LARGE SCALE GENOMIC DNA]</scope>
    <source>
        <strain>CCMP373 / CSIRO-CS-57 / BT6</strain>
    </source>
</reference>
<accession>Q4G3D7</accession>
<organism>
    <name type="scientific">Emiliania huxleyi</name>
    <name type="common">Coccolithophore</name>
    <name type="synonym">Pontosphaera huxleyi</name>
    <dbReference type="NCBI Taxonomy" id="2903"/>
    <lineage>
        <taxon>Eukaryota</taxon>
        <taxon>Haptista</taxon>
        <taxon>Haptophyta</taxon>
        <taxon>Prymnesiophyceae</taxon>
        <taxon>Isochrysidales</taxon>
        <taxon>Noelaerhabdaceae</taxon>
        <taxon>Emiliania</taxon>
    </lineage>
</organism>
<protein>
    <recommendedName>
        <fullName evidence="2">Cytochrome f</fullName>
    </recommendedName>
</protein>
<evidence type="ECO:0000250" key="1"/>
<evidence type="ECO:0000255" key="2">
    <source>
        <dbReference type="HAMAP-Rule" id="MF_00610"/>
    </source>
</evidence>
<gene>
    <name evidence="2" type="primary">petA</name>
</gene>